<name>LMCD1_BOVIN</name>
<gene>
    <name type="primary">LMCD1</name>
</gene>
<accession>Q17QE2</accession>
<sequence length="363" mass="40723">MAKVAKDLNPRVQKMSLGQQQSARGVPCLRCKGTCSGFEPHSWRKICKSCKCSQEDHCLSSDLEDDRKIGRLLMDSKYSTLTARVKGGDGIRIYKRNRMIMTNPIATGKDPTFDTITYEWAPPGVTQKLGLQYMELIPKEKQPVTGTEGALYRRRQLMHQLPIYDQDPSRCRGLLENELKVMEEFVKQYKSEALGVGEVALPGQGGLPKEEGKQQEKPEGAETAPPTTNGSIGDPSKEYVCELCKGVAPADSPVVYSDRAGYSKQWHPACFVCAKCSEPLVDLIYFWKDGAPWCGRHYCESLRPRCSGCDEIIFSEDYQRVEDLAWHRKHFVCEGCEQQLGGRAYIVTMGQLLCPTCSKSKRS</sequence>
<reference key="1">
    <citation type="submission" date="2006-06" db="EMBL/GenBank/DDBJ databases">
        <authorList>
            <consortium name="NIH - Mammalian Gene Collection (MGC) project"/>
        </authorList>
    </citation>
    <scope>NUCLEOTIDE SEQUENCE [LARGE SCALE MRNA]</scope>
    <source>
        <strain>Hereford</strain>
        <tissue>Fetal pons</tissue>
    </source>
</reference>
<keyword id="KW-0963">Cytoplasm</keyword>
<keyword id="KW-0440">LIM domain</keyword>
<keyword id="KW-0479">Metal-binding</keyword>
<keyword id="KW-0539">Nucleus</keyword>
<keyword id="KW-0597">Phosphoprotein</keyword>
<keyword id="KW-1185">Reference proteome</keyword>
<keyword id="KW-0677">Repeat</keyword>
<keyword id="KW-0678">Repressor</keyword>
<keyword id="KW-0804">Transcription</keyword>
<keyword id="KW-0805">Transcription regulation</keyword>
<keyword id="KW-0862">Zinc</keyword>
<feature type="chain" id="PRO_0000252665" description="LIM and cysteine-rich domains protein 1">
    <location>
        <begin position="1"/>
        <end position="363"/>
    </location>
</feature>
<feature type="domain" description="PET" evidence="4">
    <location>
        <begin position="99"/>
        <end position="206"/>
    </location>
</feature>
<feature type="domain" description="LIM zinc-binding 1" evidence="3">
    <location>
        <begin position="239"/>
        <end position="304"/>
    </location>
</feature>
<feature type="domain" description="LIM zinc-binding 2" evidence="3">
    <location>
        <begin position="305"/>
        <end position="363"/>
    </location>
</feature>
<feature type="region of interest" description="Disordered" evidence="5">
    <location>
        <begin position="200"/>
        <end position="234"/>
    </location>
</feature>
<feature type="compositionally biased region" description="Basic and acidic residues" evidence="5">
    <location>
        <begin position="208"/>
        <end position="220"/>
    </location>
</feature>
<feature type="modified residue" description="Phosphoserine" evidence="2">
    <location>
        <position position="16"/>
    </location>
</feature>
<evidence type="ECO:0000250" key="1"/>
<evidence type="ECO:0000250" key="2">
    <source>
        <dbReference type="UniProtKB" id="Q9NZU5"/>
    </source>
</evidence>
<evidence type="ECO:0000255" key="3">
    <source>
        <dbReference type="PROSITE-ProRule" id="PRU00125"/>
    </source>
</evidence>
<evidence type="ECO:0000255" key="4">
    <source>
        <dbReference type="PROSITE-ProRule" id="PRU00636"/>
    </source>
</evidence>
<evidence type="ECO:0000256" key="5">
    <source>
        <dbReference type="SAM" id="MobiDB-lite"/>
    </source>
</evidence>
<comment type="function">
    <text evidence="1">Transcriptional cofactor that restricts GATA6 function by inhibiting DNA-binding, resulting in repression of GATA6 transcriptional activation of downstream target genes. Represses GATA6-mediated trans activation of lung- and cardiac tissue-specific promoters. Inhibits DNA-binding by GATA4 and GATA1 to the cTNC promoter. Plays a critical role in the development of cardiac hypertrophy via activation of calcineurin/nuclear factor of activated T-cells signaling pathway (By similarity).</text>
</comment>
<comment type="subunit">
    <text evidence="1">Interacts with beta-dystroglycan. Interacts with GATA1, GATA4 and GATA6 (By similarity).</text>
</comment>
<comment type="subcellular location">
    <subcellularLocation>
        <location evidence="1">Cytoplasm</location>
    </subcellularLocation>
    <subcellularLocation>
        <location evidence="1">Nucleus</location>
    </subcellularLocation>
    <text evidence="1">May shuttle between the cytoplasm and the nucleus.</text>
</comment>
<comment type="domain">
    <text evidence="1">The LIM zinc-binding domains and the Cys-rich region mediate interaction with GATA6.</text>
</comment>
<protein>
    <recommendedName>
        <fullName>LIM and cysteine-rich domains protein 1</fullName>
    </recommendedName>
</protein>
<dbReference type="EMBL" id="BC118414">
    <property type="protein sequence ID" value="AAI18415.1"/>
    <property type="molecule type" value="mRNA"/>
</dbReference>
<dbReference type="RefSeq" id="NP_001069690.1">
    <property type="nucleotide sequence ID" value="NM_001076222.2"/>
</dbReference>
<dbReference type="SMR" id="Q17QE2"/>
<dbReference type="FunCoup" id="Q17QE2">
    <property type="interactions" value="358"/>
</dbReference>
<dbReference type="STRING" id="9913.ENSBTAP00000070830"/>
<dbReference type="PaxDb" id="9913-ENSBTAP00000007149"/>
<dbReference type="Ensembl" id="ENSBTAT00000007149.5">
    <property type="protein sequence ID" value="ENSBTAP00000007149.3"/>
    <property type="gene ID" value="ENSBTAG00000005431.5"/>
</dbReference>
<dbReference type="GeneID" id="540474"/>
<dbReference type="KEGG" id="bta:540474"/>
<dbReference type="CTD" id="29995"/>
<dbReference type="VEuPathDB" id="HostDB:ENSBTAG00000005431"/>
<dbReference type="VGNC" id="VGNC:30926">
    <property type="gene designation" value="LMCD1"/>
</dbReference>
<dbReference type="eggNOG" id="KOG1704">
    <property type="taxonomic scope" value="Eukaryota"/>
</dbReference>
<dbReference type="GeneTree" id="ENSGT00940000158813"/>
<dbReference type="HOGENOM" id="CLU_008937_1_0_1"/>
<dbReference type="InParanoid" id="Q17QE2"/>
<dbReference type="OMA" id="HDALWHP"/>
<dbReference type="OrthoDB" id="10069167at2759"/>
<dbReference type="TreeFam" id="TF313265"/>
<dbReference type="Reactome" id="R-BTA-5683826">
    <property type="pathway name" value="Surfactant metabolism"/>
</dbReference>
<dbReference type="Proteomes" id="UP000009136">
    <property type="component" value="Chromosome 22"/>
</dbReference>
<dbReference type="Bgee" id="ENSBTAG00000005431">
    <property type="expression patterns" value="Expressed in gluteus medius and 99 other cell types or tissues"/>
</dbReference>
<dbReference type="GO" id="GO:0005737">
    <property type="term" value="C:cytoplasm"/>
    <property type="evidence" value="ECO:0007669"/>
    <property type="project" value="UniProtKB-SubCell"/>
</dbReference>
<dbReference type="GO" id="GO:0005634">
    <property type="term" value="C:nucleus"/>
    <property type="evidence" value="ECO:0000318"/>
    <property type="project" value="GO_Central"/>
</dbReference>
<dbReference type="GO" id="GO:0003714">
    <property type="term" value="F:transcription corepressor activity"/>
    <property type="evidence" value="ECO:0000250"/>
    <property type="project" value="UniProtKB"/>
</dbReference>
<dbReference type="GO" id="GO:0008270">
    <property type="term" value="F:zinc ion binding"/>
    <property type="evidence" value="ECO:0007669"/>
    <property type="project" value="InterPro"/>
</dbReference>
<dbReference type="GO" id="GO:0070886">
    <property type="term" value="P:positive regulation of calcineurin-NFAT signaling cascade"/>
    <property type="evidence" value="ECO:0000250"/>
    <property type="project" value="UniProtKB"/>
</dbReference>
<dbReference type="GO" id="GO:0010611">
    <property type="term" value="P:regulation of cardiac muscle hypertrophy"/>
    <property type="evidence" value="ECO:0000250"/>
    <property type="project" value="UniProtKB"/>
</dbReference>
<dbReference type="CDD" id="cd09340">
    <property type="entry name" value="LIM1_Testin_like"/>
    <property type="match status" value="1"/>
</dbReference>
<dbReference type="CDD" id="cd09829">
    <property type="entry name" value="PET_testin"/>
    <property type="match status" value="1"/>
</dbReference>
<dbReference type="FunFam" id="2.10.110.10:FF:000079">
    <property type="entry name" value="LIM and cysteine-rich domains protein 1"/>
    <property type="match status" value="1"/>
</dbReference>
<dbReference type="FunFam" id="2.10.110.10:FF:000005">
    <property type="entry name" value="Testin isoform 1"/>
    <property type="match status" value="1"/>
</dbReference>
<dbReference type="Gene3D" id="2.10.110.10">
    <property type="entry name" value="Cysteine Rich Protein"/>
    <property type="match status" value="2"/>
</dbReference>
<dbReference type="InterPro" id="IPR010442">
    <property type="entry name" value="PET_domain"/>
</dbReference>
<dbReference type="InterPro" id="IPR033724">
    <property type="entry name" value="PET_testin"/>
</dbReference>
<dbReference type="InterPro" id="IPR047120">
    <property type="entry name" value="Pk/Esn/Tes"/>
</dbReference>
<dbReference type="InterPro" id="IPR001781">
    <property type="entry name" value="Znf_LIM"/>
</dbReference>
<dbReference type="PANTHER" id="PTHR24211:SF0">
    <property type="entry name" value="LIM AND CYSTEINE-RICH DOMAINS PROTEIN 1"/>
    <property type="match status" value="1"/>
</dbReference>
<dbReference type="PANTHER" id="PTHR24211">
    <property type="entry name" value="LIM DOMAIN-CONTAINING PROTEIN"/>
    <property type="match status" value="1"/>
</dbReference>
<dbReference type="Pfam" id="PF00412">
    <property type="entry name" value="LIM"/>
    <property type="match status" value="2"/>
</dbReference>
<dbReference type="Pfam" id="PF06297">
    <property type="entry name" value="PET"/>
    <property type="match status" value="1"/>
</dbReference>
<dbReference type="SMART" id="SM00132">
    <property type="entry name" value="LIM"/>
    <property type="match status" value="2"/>
</dbReference>
<dbReference type="SUPFAM" id="SSF57716">
    <property type="entry name" value="Glucocorticoid receptor-like (DNA-binding domain)"/>
    <property type="match status" value="1"/>
</dbReference>
<dbReference type="PROSITE" id="PS00478">
    <property type="entry name" value="LIM_DOMAIN_1"/>
    <property type="match status" value="2"/>
</dbReference>
<dbReference type="PROSITE" id="PS50023">
    <property type="entry name" value="LIM_DOMAIN_2"/>
    <property type="match status" value="2"/>
</dbReference>
<dbReference type="PROSITE" id="PS51303">
    <property type="entry name" value="PET"/>
    <property type="match status" value="1"/>
</dbReference>
<proteinExistence type="evidence at transcript level"/>
<organism>
    <name type="scientific">Bos taurus</name>
    <name type="common">Bovine</name>
    <dbReference type="NCBI Taxonomy" id="9913"/>
    <lineage>
        <taxon>Eukaryota</taxon>
        <taxon>Metazoa</taxon>
        <taxon>Chordata</taxon>
        <taxon>Craniata</taxon>
        <taxon>Vertebrata</taxon>
        <taxon>Euteleostomi</taxon>
        <taxon>Mammalia</taxon>
        <taxon>Eutheria</taxon>
        <taxon>Laurasiatheria</taxon>
        <taxon>Artiodactyla</taxon>
        <taxon>Ruminantia</taxon>
        <taxon>Pecora</taxon>
        <taxon>Bovidae</taxon>
        <taxon>Bovinae</taxon>
        <taxon>Bos</taxon>
    </lineage>
</organism>